<name>HYD1A_BEAB2</name>
<protein>
    <recommendedName>
        <fullName evidence="7">Class I hydrophobin A</fullName>
    </recommendedName>
</protein>
<proteinExistence type="evidence at transcript level"/>
<reference key="1">
    <citation type="journal article" date="2012" name="Sci. Rep.">
        <title>Genomic perspectives on the evolution of fungal entomopathogenicity in Beauveria bassiana.</title>
        <authorList>
            <person name="Xiao G."/>
            <person name="Ying S.-H."/>
            <person name="Zheng P."/>
            <person name="Wang Z.-L."/>
            <person name="Zhang S."/>
            <person name="Xie X.-Q."/>
            <person name="Shang Y."/>
            <person name="St Leger R.J."/>
            <person name="Zhao G.-P."/>
            <person name="Wang C."/>
            <person name="Feng M.-G."/>
        </authorList>
    </citation>
    <scope>NUCLEOTIDE SEQUENCE [LARGE SCALE GENOMIC DNA]</scope>
    <source>
        <strain>ARSEF 2860</strain>
    </source>
</reference>
<reference key="2">
    <citation type="journal article" date="2007" name="Microbiology">
        <title>Phage display cDNA cloning and expression analysis of hydrophobins from the entomopathogenic fungus Beauveria (Cordyceps) bassiana.</title>
        <authorList>
            <person name="Cho E.M."/>
            <person name="Kirkland B."/>
            <person name="Holder D."/>
            <person name="Keyhani N."/>
        </authorList>
    </citation>
    <scope>TISSUE SPECIFICITY</scope>
</reference>
<reference key="3">
    <citation type="journal article" date="2011" name="Mol. Microbiol.">
        <title>Two hydrophobins are involved in fungal spore coat rodlet layer assembly and each play distinct roles in surface interactions, development and pathogenesis in the entomopathogenic fungus, Beauveria bassiana.</title>
        <authorList>
            <person name="Zhang S."/>
            <person name="Xia Y.X."/>
            <person name="Kim B."/>
            <person name="Keyhani N.O."/>
        </authorList>
    </citation>
    <scope>FUNCTION</scope>
    <scope>DISRUPTION PHENOTYPE</scope>
    <scope>SUBCELLULAR LOCATION</scope>
</reference>
<reference key="4">
    <citation type="journal article" date="2025" name="Microbiol. Res.">
        <title>Deciphering roles of nine hydrophobins (Hyd1A-F and Hyd2A-C) in the asexual and insect-pathogenic lifecycles of Beauveria bassiana.</title>
        <authorList>
            <person name="Feng J.R."/>
            <person name="Li M."/>
            <person name="Ying S.H."/>
            <person name="Feng M.G."/>
        </authorList>
    </citation>
    <scope>FUNCTION</scope>
    <scope>INDUCTION</scope>
    <scope>SUBCELLULAR LOCATION</scope>
    <scope>DISRUPTION PHENOTYPE</scope>
</reference>
<dbReference type="EMBL" id="JH725155">
    <property type="protein sequence ID" value="EJP68119.1"/>
    <property type="molecule type" value="Genomic_DNA"/>
</dbReference>
<dbReference type="RefSeq" id="XP_008596334.1">
    <property type="nucleotide sequence ID" value="XM_008598112.1"/>
</dbReference>
<dbReference type="SMR" id="J4KPV6"/>
<dbReference type="STRING" id="655819.J4KPV6"/>
<dbReference type="EnsemblFungi" id="BB8028_0007g04080.1">
    <property type="protein sequence ID" value="BB8028_0007g04080.1"/>
    <property type="gene ID" value="BB8028_0007g04080"/>
</dbReference>
<dbReference type="GeneID" id="19886027"/>
<dbReference type="HOGENOM" id="CLU_106380_0_0_1"/>
<dbReference type="InParanoid" id="J4KPV6"/>
<dbReference type="OrthoDB" id="8437at474943"/>
<dbReference type="Proteomes" id="UP000002762">
    <property type="component" value="Unassembled WGS sequence"/>
</dbReference>
<dbReference type="GO" id="GO:0005576">
    <property type="term" value="C:extracellular region"/>
    <property type="evidence" value="ECO:0007669"/>
    <property type="project" value="UniProtKB-KW"/>
</dbReference>
<dbReference type="GO" id="GO:0009277">
    <property type="term" value="C:fungal-type cell wall"/>
    <property type="evidence" value="ECO:0007669"/>
    <property type="project" value="InterPro"/>
</dbReference>
<dbReference type="GO" id="GO:0005199">
    <property type="term" value="F:structural constituent of cell wall"/>
    <property type="evidence" value="ECO:0007669"/>
    <property type="project" value="InterPro"/>
</dbReference>
<dbReference type="InterPro" id="IPR001338">
    <property type="entry name" value="Hydrophobin"/>
</dbReference>
<dbReference type="Pfam" id="PF01185">
    <property type="entry name" value="Hydrophobin"/>
    <property type="match status" value="1"/>
</dbReference>
<dbReference type="SMART" id="SM00075">
    <property type="entry name" value="HYDRO"/>
    <property type="match status" value="1"/>
</dbReference>
<evidence type="ECO:0000250" key="1">
    <source>
        <dbReference type="UniProtKB" id="Q04571"/>
    </source>
</evidence>
<evidence type="ECO:0000255" key="2"/>
<evidence type="ECO:0000269" key="3">
    <source>
    </source>
</evidence>
<evidence type="ECO:0000269" key="4">
    <source>
    </source>
</evidence>
<evidence type="ECO:0000269" key="5">
    <source>
    </source>
</evidence>
<evidence type="ECO:0000303" key="6">
    <source>
    </source>
</evidence>
<evidence type="ECO:0000303" key="7">
    <source>
    </source>
</evidence>
<evidence type="ECO:0000305" key="8"/>
<evidence type="ECO:0000305" key="9">
    <source>
    </source>
</evidence>
<gene>
    <name evidence="7" type="primary">hyd1A</name>
    <name evidence="6" type="synonym">hyd1</name>
    <name type="ORF">BBA_03015</name>
</gene>
<comment type="function">
    <text evidence="4 5 9">Aerial growth, conidiation, and dispersal of filamentous fungi in the environment rely upon a capability of their secreting small amphipathic proteins called hydrophobins (HPBs) with low sequence identity. Class I can self-assemble into an outermost layer of rodlet bundles on aerial cell surfaces, conferring cellular hydrophobicity that supports fungal growth, development and dispersal; whereas Class II form highly ordered films at water-air interfaces through intermolecular interactions but contribute nothing to the rodlet structure (Probable). Hyd1A contributes to certain cell wall-related features, such as hydrophobicity but is not involved in cell wall-related events during fungal proliferation in host hemocoel (PubMed:39724799). Hyd1A and hyd1B coregulate the formation, morphology and orderly assembly of rodlet bundles required for conidial hydrophobicity and infectivity (PubMed:39724799). Contributes to the spore coat rodlet layer (PubMed:21375591).</text>
</comment>
<comment type="subcellular location">
    <subcellularLocation>
        <location evidence="4 5">Secreted</location>
    </subcellularLocation>
    <subcellularLocation>
        <location evidence="4 5">Secreted</location>
        <location evidence="4 5">Cell wall</location>
    </subcellularLocation>
    <subcellularLocation>
        <location evidence="4">Spore coat</location>
    </subcellularLocation>
    <subcellularLocation>
        <location evidence="5">Vacuole</location>
    </subcellularLocation>
    <subcellularLocation>
        <location evidence="5">Cytoplasmic vesicle</location>
    </subcellularLocation>
    <text evidence="4 5">Accumulates exclusively on the cell walls of aerial hyphae and conidia and in the vacuoles and vesicles of hyphae and blastospores.</text>
</comment>
<comment type="tissue specificity">
    <text evidence="3">Expressed in aerial conidia, in vitro blastospores, submerged conidia, and cells sporulating on chitin and insect cuticle, with hyd1 expression peaking in growing mycelia.</text>
</comment>
<comment type="induction">
    <text evidence="5">Under normal conditions on SDAY medium (Sabouraud dextrose agar plus 1% yeast extract), hyd1A is increasingly up-regulated from 562-fold on day 3 to 1742-fold on day 5, and maintained at high levels afterwards. Hyd1A is the most active at transcription level under normal culture conditions, followed by hyd1B, hyd1E, hyd2A and hyd2C in order.</text>
</comment>
<comment type="disruption phenotype">
    <text evidence="5">Leads to complete ablation of slender rodlets on conidial coat. Significantly reduces conidial hydrophobicity, adhesion to insect cuticle, virulence via normal cuticle infection and dispersal potential (PubMed:39724799). Does not affect radial growth and multiple stress responses (PubMed:39724799). Impairs significantly conidial tolerance to a wet-heat stress at 45 degrees Celsius (PubMed:39724799).</text>
</comment>
<comment type="similarity">
    <text evidence="8">Belongs to the fungal hydrophobin family.</text>
</comment>
<feature type="signal peptide" evidence="2">
    <location>
        <begin position="1"/>
        <end position="16"/>
    </location>
</feature>
<feature type="chain" id="PRO_5013986894" description="Class I hydrophobin A">
    <location>
        <begin position="17"/>
        <end position="136"/>
    </location>
</feature>
<feature type="disulfide bond" evidence="1">
    <location>
        <begin position="39"/>
        <end position="109"/>
    </location>
</feature>
<feature type="disulfide bond" evidence="1">
    <location>
        <begin position="47"/>
        <end position="103"/>
    </location>
</feature>
<feature type="disulfide bond" evidence="1">
    <location>
        <begin position="48"/>
        <end position="85"/>
    </location>
</feature>
<feature type="disulfide bond" evidence="1">
    <location>
        <begin position="110"/>
        <end position="128"/>
    </location>
</feature>
<accession>J4KPV6</accession>
<sequence length="136" mass="13810">MRFALAITTLIAAVTAAPSGHHGGKDLHKMTLGQAGDRCGADQSIYCCNEKTTKIEHSSPETGLGGLLGATVGADGLLSHLLGTCTKIPVNVLAVGNLLQSECTNRAACCHNTPSVAYGGLVNLALPCVAIGSLIQ</sequence>
<keyword id="KW-0134">Cell wall</keyword>
<keyword id="KW-0968">Cytoplasmic vesicle</keyword>
<keyword id="KW-1015">Disulfide bond</keyword>
<keyword id="KW-1185">Reference proteome</keyword>
<keyword id="KW-0964">Secreted</keyword>
<keyword id="KW-0732">Signal</keyword>
<keyword id="KW-0926">Vacuole</keyword>
<organism>
    <name type="scientific">Beauveria bassiana (strain ARSEF 2860)</name>
    <name type="common">White muscardine disease fungus</name>
    <name type="synonym">Tritirachium shiotae</name>
    <dbReference type="NCBI Taxonomy" id="655819"/>
    <lineage>
        <taxon>Eukaryota</taxon>
        <taxon>Fungi</taxon>
        <taxon>Dikarya</taxon>
        <taxon>Ascomycota</taxon>
        <taxon>Pezizomycotina</taxon>
        <taxon>Sordariomycetes</taxon>
        <taxon>Hypocreomycetidae</taxon>
        <taxon>Hypocreales</taxon>
        <taxon>Cordycipitaceae</taxon>
        <taxon>Beauveria</taxon>
    </lineage>
</organism>